<sequence length="491" mass="54648">MKIAIAGGGIGGLISALMLRKKGYEVSLFEKRDRLGGRLAFTEEQGYRIDEGPTIVLLPEMLTSILNEAGISRDQYELININPLYKLHFKDGSSYTKYNSIERQIQEIKENFPGNEEGFVQFMKDMEIRFNLGKDQFLEKSFHDKRTFWTRNNLKTLVHLKAYKSVNNSLKAYFQDERIRQAYSLQTLYIGGNPLDSPALYSLISFSEHKHGIYYLKGGYASLVTVLENALLNSGVKVMKNATVERVVTEGEQAAALIVNGEEVKADAFVLNGDFPGASKMIPKESMPARNYTASSSCVLLYFGLDKVYRDSPVHQFFMGSNFQQHMKEIFETKEVPSDPSIYAFHPSVIDSSLAPEGHGVLYALVPVPSGSPINWGEQEGFVEKVIDQLEERGFPGLRKSIQWKKVRTPDDKEMEGLFQGGSFGIAPTLFQSGVFRPQVKPSKLTNVYAAGASIHPGGGIPIVMQGAKLMVSAILSDHQNKEREGVSLSG</sequence>
<gene>
    <name evidence="3" type="primary">crtNc</name>
</gene>
<name>CRTNC_METID</name>
<comment type="function">
    <text evidence="2">Involved in the biosynthesis of the major C30 carotenoid methyl 4'-[6-O-(acylglycosyl)oxy]-4,4'-diapolycopen-4-oic acid via 4,4'-diapolycopen-4-oic acid intermediate. Catalyzes the oxidation of 4,4'-diapolycopen-4-al to yield 4,4'-diapolycopen-4-oic acid.</text>
</comment>
<comment type="catalytic activity">
    <reaction evidence="2">
        <text>all-trans-4,4'-diapolycopen-4-al + A + H2O = all-trans-4,4'-diapolycopen-4-oate + AH2 + H(+)</text>
        <dbReference type="Rhea" id="RHEA:44716"/>
        <dbReference type="ChEBI" id="CHEBI:13193"/>
        <dbReference type="ChEBI" id="CHEBI:15377"/>
        <dbReference type="ChEBI" id="CHEBI:15378"/>
        <dbReference type="ChEBI" id="CHEBI:17499"/>
        <dbReference type="ChEBI" id="CHEBI:138599"/>
        <dbReference type="ChEBI" id="CHEBI:138600"/>
        <dbReference type="EC" id="1.2.99.10"/>
    </reaction>
</comment>
<comment type="pathway">
    <text evidence="4">Carotenoid biosynthesis.</text>
</comment>
<comment type="similarity">
    <text evidence="4">Belongs to the carotenoid/retinoid oxidoreductase family. CrtN subfamily.</text>
</comment>
<feature type="chain" id="PRO_0000443510" description="4,4'-diapolycopen-4-al dehydrogenase">
    <location>
        <begin position="1"/>
        <end position="491"/>
    </location>
</feature>
<feature type="active site" evidence="1">
    <location>
        <position position="208"/>
    </location>
</feature>
<dbReference type="EC" id="1.2.99.10" evidence="2"/>
<dbReference type="SMR" id="P0DPE9"/>
<dbReference type="STRING" id="246786.GS18_0221725"/>
<dbReference type="BRENDA" id="1.2.99.10">
    <property type="organism ID" value="14726"/>
</dbReference>
<dbReference type="GO" id="GO:0016491">
    <property type="term" value="F:oxidoreductase activity"/>
    <property type="evidence" value="ECO:0007669"/>
    <property type="project" value="UniProtKB-KW"/>
</dbReference>
<dbReference type="GO" id="GO:0016117">
    <property type="term" value="P:carotenoid biosynthetic process"/>
    <property type="evidence" value="ECO:0007669"/>
    <property type="project" value="UniProtKB-KW"/>
</dbReference>
<dbReference type="Gene3D" id="3.50.50.60">
    <property type="entry name" value="FAD/NAD(P)-binding domain"/>
    <property type="match status" value="2"/>
</dbReference>
<dbReference type="InterPro" id="IPR002937">
    <property type="entry name" value="Amino_oxidase"/>
</dbReference>
<dbReference type="InterPro" id="IPR014105">
    <property type="entry name" value="Carotenoid/retinoid_OxRdtase"/>
</dbReference>
<dbReference type="InterPro" id="IPR036188">
    <property type="entry name" value="FAD/NAD-bd_sf"/>
</dbReference>
<dbReference type="NCBIfam" id="TIGR02734">
    <property type="entry name" value="crtI_fam"/>
    <property type="match status" value="1"/>
</dbReference>
<dbReference type="PANTHER" id="PTHR43734">
    <property type="entry name" value="PHYTOENE DESATURASE"/>
    <property type="match status" value="1"/>
</dbReference>
<dbReference type="PANTHER" id="PTHR43734:SF1">
    <property type="entry name" value="PHYTOENE DESATURASE"/>
    <property type="match status" value="1"/>
</dbReference>
<dbReference type="Pfam" id="PF01593">
    <property type="entry name" value="Amino_oxidase"/>
    <property type="match status" value="1"/>
</dbReference>
<dbReference type="SUPFAM" id="SSF51905">
    <property type="entry name" value="FAD/NAD(P)-binding domain"/>
    <property type="match status" value="1"/>
</dbReference>
<reference key="1">
    <citation type="journal article" date="2015" name="Microbiology">
        <title>Annotation and functional assignment of the genes for the C30 carotenoid pathways from the genomes of two bacteria: Bacillus indicus and Bacillus firmus.</title>
        <authorList>
            <person name="Steiger S."/>
            <person name="Perez-Fons L."/>
            <person name="Cutting S.M."/>
            <person name="Fraser P.D."/>
            <person name="Sandmann G."/>
        </authorList>
    </citation>
    <scope>NUCLEOTIDE SEQUENCE [GENOMIC DNA]</scope>
    <scope>FUNCTION</scope>
    <scope>CATALYTIC ACTIVITY</scope>
    <source>
        <strain>HU36</strain>
    </source>
</reference>
<organism>
    <name type="scientific">Metabacillus indicus</name>
    <name type="common">Bacillus indicus</name>
    <dbReference type="NCBI Taxonomy" id="246786"/>
    <lineage>
        <taxon>Bacteria</taxon>
        <taxon>Bacillati</taxon>
        <taxon>Bacillota</taxon>
        <taxon>Bacilli</taxon>
        <taxon>Bacillales</taxon>
        <taxon>Bacillaceae</taxon>
        <taxon>Metabacillus</taxon>
    </lineage>
</organism>
<accession>P0DPE9</accession>
<evidence type="ECO:0000255" key="1">
    <source>
        <dbReference type="PROSITE-ProRule" id="PRU10007"/>
    </source>
</evidence>
<evidence type="ECO:0000269" key="2">
    <source>
    </source>
</evidence>
<evidence type="ECO:0000303" key="3">
    <source>
    </source>
</evidence>
<evidence type="ECO:0000305" key="4"/>
<proteinExistence type="evidence at protein level"/>
<protein>
    <recommendedName>
        <fullName evidence="4">4,4'-diapolycopen-4-al dehydrogenase</fullName>
        <ecNumber evidence="2">1.2.99.10</ecNumber>
    </recommendedName>
    <alternativeName>
        <fullName evidence="4">4,4'-diapolycopen-4-al oxidase</fullName>
    </alternativeName>
    <alternativeName>
        <fullName evidence="4">4,4'-diapolycopen-4-oate synthase</fullName>
    </alternativeName>
    <alternativeName>
        <fullName evidence="3">4,4'-diapolycopene aldehyde oxidase</fullName>
    </alternativeName>
</protein>
<keyword id="KW-0125">Carotenoid biosynthesis</keyword>
<keyword id="KW-0560">Oxidoreductase</keyword>